<comment type="function">
    <text evidence="3 4 5">Protease that catalyzes two essential functions in the SUMO pathway: processing of full-length SUMOs to their mature forms and deconjugation of SUMO from targeted proteins. Cleaves precursors of SUM1 and SUM2, but not of SUM3 or SUM5. Able to release SUM1 and SUM2 from conjugates, but unable to cleave SUM3. Protease activity mainly directed at deconjugating SUM1 and SUM2 from their target proteins. Regulates salt stress responses and flowering time. Redundant with ULP1D.</text>
</comment>
<comment type="subcellular location">
    <subcellularLocation>
        <location evidence="5">Nucleus</location>
        <location evidence="5">Nucleoplasm</location>
    </subcellularLocation>
</comment>
<comment type="alternative products">
    <event type="alternative splicing"/>
    <isoform>
        <id>Q8RWN0-1</id>
        <name>1</name>
        <sequence type="displayed"/>
    </isoform>
    <isoform>
        <id>Q8RWN0-2</id>
        <name>2</name>
        <sequence type="described" ref="VSP_039563"/>
    </isoform>
</comment>
<comment type="domain">
    <text>The N-terminal regulatory domain is not required for peptidase activity in vitro.</text>
</comment>
<comment type="disruption phenotype">
    <text evidence="5">No visible phenotype in terms of overall growth, salt sensitivity and flowering time. Early flowering time and salt sensitivity in ulp1d/ots1 and ulp1c/ots2 double mutants.</text>
</comment>
<comment type="similarity">
    <text evidence="6">Belongs to the peptidase C48 family.</text>
</comment>
<comment type="sequence caution" evidence="6">
    <conflict type="erroneous gene model prediction">
        <sequence resource="EMBL-CDS" id="AAD39580"/>
    </conflict>
</comment>
<protein>
    <recommendedName>
        <fullName>Ubiquitin-like-specific protease 1C</fullName>
        <ecNumber>3.4.22.-</ecNumber>
    </recommendedName>
    <alternativeName>
        <fullName>Protein OVERLY TOLERANT TO SALT 2</fullName>
    </alternativeName>
</protein>
<accession>Q8RWN0</accession>
<accession>Q3EDF1</accession>
<accession>Q9XIJ4</accession>
<evidence type="ECO:0000250" key="1"/>
<evidence type="ECO:0000256" key="2">
    <source>
        <dbReference type="SAM" id="MobiDB-lite"/>
    </source>
</evidence>
<evidence type="ECO:0000269" key="3">
    <source>
    </source>
</evidence>
<evidence type="ECO:0000269" key="4">
    <source>
    </source>
</evidence>
<evidence type="ECO:0000269" key="5">
    <source>
    </source>
</evidence>
<evidence type="ECO:0000305" key="6"/>
<feature type="chain" id="PRO_0000395970" description="Ubiquitin-like-specific protease 1C">
    <location>
        <begin position="1"/>
        <end position="571"/>
    </location>
</feature>
<feature type="region of interest" description="Disordered" evidence="2">
    <location>
        <begin position="221"/>
        <end position="260"/>
    </location>
</feature>
<feature type="compositionally biased region" description="Basic and acidic residues" evidence="2">
    <location>
        <begin position="222"/>
        <end position="233"/>
    </location>
</feature>
<feature type="active site" evidence="1">
    <location>
        <position position="426"/>
    </location>
</feature>
<feature type="active site" evidence="1">
    <location>
        <position position="449"/>
    </location>
</feature>
<feature type="active site" evidence="1">
    <location>
        <position position="512"/>
    </location>
</feature>
<feature type="splice variant" id="VSP_039563" description="In isoform 2." evidence="6">
    <location>
        <position position="113"/>
    </location>
</feature>
<feature type="mutagenesis site" description="Loss of peptidase activity." evidence="4">
    <original>C</original>
    <variation>A</variation>
    <variation>S</variation>
    <location>
        <position position="512"/>
    </location>
</feature>
<keyword id="KW-0025">Alternative splicing</keyword>
<keyword id="KW-0378">Hydrolase</keyword>
<keyword id="KW-0539">Nucleus</keyword>
<keyword id="KW-0645">Protease</keyword>
<keyword id="KW-1185">Reference proteome</keyword>
<keyword id="KW-0788">Thiol protease</keyword>
<keyword id="KW-0833">Ubl conjugation pathway</keyword>
<reference key="1">
    <citation type="journal article" date="2000" name="Nature">
        <title>Sequence and analysis of chromosome 1 of the plant Arabidopsis thaliana.</title>
        <authorList>
            <person name="Theologis A."/>
            <person name="Ecker J.R."/>
            <person name="Palm C.J."/>
            <person name="Federspiel N.A."/>
            <person name="Kaul S."/>
            <person name="White O."/>
            <person name="Alonso J."/>
            <person name="Altafi H."/>
            <person name="Araujo R."/>
            <person name="Bowman C.L."/>
            <person name="Brooks S.Y."/>
            <person name="Buehler E."/>
            <person name="Chan A."/>
            <person name="Chao Q."/>
            <person name="Chen H."/>
            <person name="Cheuk R.F."/>
            <person name="Chin C.W."/>
            <person name="Chung M.K."/>
            <person name="Conn L."/>
            <person name="Conway A.B."/>
            <person name="Conway A.R."/>
            <person name="Creasy T.H."/>
            <person name="Dewar K."/>
            <person name="Dunn P."/>
            <person name="Etgu P."/>
            <person name="Feldblyum T.V."/>
            <person name="Feng J.-D."/>
            <person name="Fong B."/>
            <person name="Fujii C.Y."/>
            <person name="Gill J.E."/>
            <person name="Goldsmith A.D."/>
            <person name="Haas B."/>
            <person name="Hansen N.F."/>
            <person name="Hughes B."/>
            <person name="Huizar L."/>
            <person name="Hunter J.L."/>
            <person name="Jenkins J."/>
            <person name="Johnson-Hopson C."/>
            <person name="Khan S."/>
            <person name="Khaykin E."/>
            <person name="Kim C.J."/>
            <person name="Koo H.L."/>
            <person name="Kremenetskaia I."/>
            <person name="Kurtz D.B."/>
            <person name="Kwan A."/>
            <person name="Lam B."/>
            <person name="Langin-Hooper S."/>
            <person name="Lee A."/>
            <person name="Lee J.M."/>
            <person name="Lenz C.A."/>
            <person name="Li J.H."/>
            <person name="Li Y.-P."/>
            <person name="Lin X."/>
            <person name="Liu S.X."/>
            <person name="Liu Z.A."/>
            <person name="Luros J.S."/>
            <person name="Maiti R."/>
            <person name="Marziali A."/>
            <person name="Militscher J."/>
            <person name="Miranda M."/>
            <person name="Nguyen M."/>
            <person name="Nierman W.C."/>
            <person name="Osborne B.I."/>
            <person name="Pai G."/>
            <person name="Peterson J."/>
            <person name="Pham P.K."/>
            <person name="Rizzo M."/>
            <person name="Rooney T."/>
            <person name="Rowley D."/>
            <person name="Sakano H."/>
            <person name="Salzberg S.L."/>
            <person name="Schwartz J.R."/>
            <person name="Shinn P."/>
            <person name="Southwick A.M."/>
            <person name="Sun H."/>
            <person name="Tallon L.J."/>
            <person name="Tambunga G."/>
            <person name="Toriumi M.J."/>
            <person name="Town C.D."/>
            <person name="Utterback T."/>
            <person name="Van Aken S."/>
            <person name="Vaysberg M."/>
            <person name="Vysotskaia V.S."/>
            <person name="Walker M."/>
            <person name="Wu D."/>
            <person name="Yu G."/>
            <person name="Fraser C.M."/>
            <person name="Venter J.C."/>
            <person name="Davis R.W."/>
        </authorList>
    </citation>
    <scope>NUCLEOTIDE SEQUENCE [LARGE SCALE GENOMIC DNA]</scope>
    <source>
        <strain>cv. Columbia</strain>
    </source>
</reference>
<reference key="2">
    <citation type="journal article" date="2017" name="Plant J.">
        <title>Araport11: a complete reannotation of the Arabidopsis thaliana reference genome.</title>
        <authorList>
            <person name="Cheng C.Y."/>
            <person name="Krishnakumar V."/>
            <person name="Chan A.P."/>
            <person name="Thibaud-Nissen F."/>
            <person name="Schobel S."/>
            <person name="Town C.D."/>
        </authorList>
    </citation>
    <scope>GENOME REANNOTATION</scope>
    <source>
        <strain>cv. Columbia</strain>
    </source>
</reference>
<reference key="3">
    <citation type="journal article" date="2003" name="Science">
        <title>Empirical analysis of transcriptional activity in the Arabidopsis genome.</title>
        <authorList>
            <person name="Yamada K."/>
            <person name="Lim J."/>
            <person name="Dale J.M."/>
            <person name="Chen H."/>
            <person name="Shinn P."/>
            <person name="Palm C.J."/>
            <person name="Southwick A.M."/>
            <person name="Wu H.C."/>
            <person name="Kim C.J."/>
            <person name="Nguyen M."/>
            <person name="Pham P.K."/>
            <person name="Cheuk R.F."/>
            <person name="Karlin-Newmann G."/>
            <person name="Liu S.X."/>
            <person name="Lam B."/>
            <person name="Sakano H."/>
            <person name="Wu T."/>
            <person name="Yu G."/>
            <person name="Miranda M."/>
            <person name="Quach H.L."/>
            <person name="Tripp M."/>
            <person name="Chang C.H."/>
            <person name="Lee J.M."/>
            <person name="Toriumi M.J."/>
            <person name="Chan M.M."/>
            <person name="Tang C.C."/>
            <person name="Onodera C.S."/>
            <person name="Deng J.M."/>
            <person name="Akiyama K."/>
            <person name="Ansari Y."/>
            <person name="Arakawa T."/>
            <person name="Banh J."/>
            <person name="Banno F."/>
            <person name="Bowser L."/>
            <person name="Brooks S.Y."/>
            <person name="Carninci P."/>
            <person name="Chao Q."/>
            <person name="Choy N."/>
            <person name="Enju A."/>
            <person name="Goldsmith A.D."/>
            <person name="Gurjal M."/>
            <person name="Hansen N.F."/>
            <person name="Hayashizaki Y."/>
            <person name="Johnson-Hopson C."/>
            <person name="Hsuan V.W."/>
            <person name="Iida K."/>
            <person name="Karnes M."/>
            <person name="Khan S."/>
            <person name="Koesema E."/>
            <person name="Ishida J."/>
            <person name="Jiang P.X."/>
            <person name="Jones T."/>
            <person name="Kawai J."/>
            <person name="Kamiya A."/>
            <person name="Meyers C."/>
            <person name="Nakajima M."/>
            <person name="Narusaka M."/>
            <person name="Seki M."/>
            <person name="Sakurai T."/>
            <person name="Satou M."/>
            <person name="Tamse R."/>
            <person name="Vaysberg M."/>
            <person name="Wallender E.K."/>
            <person name="Wong C."/>
            <person name="Yamamura Y."/>
            <person name="Yuan S."/>
            <person name="Shinozaki K."/>
            <person name="Davis R.W."/>
            <person name="Theologis A."/>
            <person name="Ecker J.R."/>
        </authorList>
    </citation>
    <scope>NUCLEOTIDE SEQUENCE [LARGE SCALE MRNA] (ISOFORM 1)</scope>
    <source>
        <strain>cv. Columbia</strain>
    </source>
</reference>
<reference key="4">
    <citation type="journal article" date="2003" name="J. Biol. Chem.">
        <title>The small ubiquitin-like modifier (SUMO) protein modification system in Arabidopsis. Accumulation of SUMO1 and -2 conjugates is increased by stress.</title>
        <authorList>
            <person name="Kurepa J."/>
            <person name="Walker J.M."/>
            <person name="Smalle J."/>
            <person name="Gosink M.M."/>
            <person name="Davis S.J."/>
            <person name="Durham T.L."/>
            <person name="Sung D.Y."/>
            <person name="Vierstra R.D."/>
        </authorList>
    </citation>
    <scope>IDENTIFICATION</scope>
    <scope>GENE FAMILY</scope>
    <scope>NOMENCLATURE</scope>
</reference>
<reference key="5">
    <citation type="journal article" date="2006" name="Biochem. J.">
        <title>Evolution of a signalling system that incorporates both redundancy and diversity: Arabidopsis SUMOylation.</title>
        <authorList>
            <person name="Chosed R."/>
            <person name="Mukherjee S."/>
            <person name="Lois L.M."/>
            <person name="Orth K."/>
        </authorList>
    </citation>
    <scope>FUNCTION</scope>
</reference>
<reference key="6">
    <citation type="journal article" date="2006" name="Plant Physiol.">
        <title>SUMO-conjugating and SUMO-deconjugating enzymes from Arabidopsis.</title>
        <authorList>
            <person name="Colby T."/>
            <person name="Matthai A."/>
            <person name="Boeckelmann A."/>
            <person name="Stuible H.P."/>
        </authorList>
    </citation>
    <scope>FUNCTION</scope>
    <scope>MUTAGENESIS OF CYS-512</scope>
    <scope>GENE FAMILY</scope>
    <scope>NOMENCLATURE</scope>
</reference>
<reference key="7">
    <citation type="journal article" date="2008" name="Plant Cell">
        <title>Small ubiquitin-like modifier proteases OVERLY TOLERANT TO SALT1 and -2 regulate salt stress responses in Arabidopsis.</title>
        <authorList>
            <person name="Conti L."/>
            <person name="Price G."/>
            <person name="O'Donnell E."/>
            <person name="Schwessinger B."/>
            <person name="Dominy P."/>
            <person name="Sadanandom A."/>
        </authorList>
    </citation>
    <scope>FUNCTION</scope>
    <scope>SUBCELLULAR LOCATION</scope>
    <scope>DISRUPTION PHENOTYPE</scope>
</reference>
<gene>
    <name type="primary">ULP1C</name>
    <name type="synonym">OTS2</name>
    <name type="ordered locus">At1g10570</name>
    <name type="ORF">T10O24.20</name>
</gene>
<organism>
    <name type="scientific">Arabidopsis thaliana</name>
    <name type="common">Mouse-ear cress</name>
    <dbReference type="NCBI Taxonomy" id="3702"/>
    <lineage>
        <taxon>Eukaryota</taxon>
        <taxon>Viridiplantae</taxon>
        <taxon>Streptophyta</taxon>
        <taxon>Embryophyta</taxon>
        <taxon>Tracheophyta</taxon>
        <taxon>Spermatophyta</taxon>
        <taxon>Magnoliopsida</taxon>
        <taxon>eudicotyledons</taxon>
        <taxon>Gunneridae</taxon>
        <taxon>Pentapetalae</taxon>
        <taxon>rosids</taxon>
        <taxon>malvids</taxon>
        <taxon>Brassicales</taxon>
        <taxon>Brassicaceae</taxon>
        <taxon>Camelineae</taxon>
        <taxon>Arabidopsis</taxon>
    </lineage>
</organism>
<dbReference type="EC" id="3.4.22.-"/>
<dbReference type="EMBL" id="AC007067">
    <property type="protein sequence ID" value="AAD39580.1"/>
    <property type="status" value="ALT_SEQ"/>
    <property type="molecule type" value="Genomic_DNA"/>
</dbReference>
<dbReference type="EMBL" id="CP002684">
    <property type="protein sequence ID" value="AEE28595.1"/>
    <property type="molecule type" value="Genomic_DNA"/>
</dbReference>
<dbReference type="EMBL" id="CP002684">
    <property type="protein sequence ID" value="AEE28596.1"/>
    <property type="molecule type" value="Genomic_DNA"/>
</dbReference>
<dbReference type="EMBL" id="AY092981">
    <property type="protein sequence ID" value="AAM12980.1"/>
    <property type="molecule type" value="mRNA"/>
</dbReference>
<dbReference type="EMBL" id="AY128798">
    <property type="protein sequence ID" value="AAM91198.1"/>
    <property type="molecule type" value="mRNA"/>
</dbReference>
<dbReference type="RefSeq" id="NP_172527.2">
    <molecule id="Q8RWN0-1"/>
    <property type="nucleotide sequence ID" value="NM_100932.4"/>
</dbReference>
<dbReference type="RefSeq" id="NP_973802.1">
    <molecule id="Q8RWN0-2"/>
    <property type="nucleotide sequence ID" value="NM_202073.4"/>
</dbReference>
<dbReference type="SMR" id="Q8RWN0"/>
<dbReference type="FunCoup" id="Q8RWN0">
    <property type="interactions" value="856"/>
</dbReference>
<dbReference type="STRING" id="3702.Q8RWN0"/>
<dbReference type="MEROPS" id="C48.A05"/>
<dbReference type="PaxDb" id="3702-AT1G10570.1"/>
<dbReference type="ProteomicsDB" id="245308">
    <molecule id="Q8RWN0-1"/>
</dbReference>
<dbReference type="EnsemblPlants" id="AT1G10570.1">
    <molecule id="Q8RWN0-1"/>
    <property type="protein sequence ID" value="AT1G10570.1"/>
    <property type="gene ID" value="AT1G10570"/>
</dbReference>
<dbReference type="EnsemblPlants" id="AT1G10570.2">
    <molecule id="Q8RWN0-2"/>
    <property type="protein sequence ID" value="AT1G10570.2"/>
    <property type="gene ID" value="AT1G10570"/>
</dbReference>
<dbReference type="GeneID" id="837598"/>
<dbReference type="Gramene" id="AT1G10570.1">
    <molecule id="Q8RWN0-1"/>
    <property type="protein sequence ID" value="AT1G10570.1"/>
    <property type="gene ID" value="AT1G10570"/>
</dbReference>
<dbReference type="Gramene" id="AT1G10570.2">
    <molecule id="Q8RWN0-2"/>
    <property type="protein sequence ID" value="AT1G10570.2"/>
    <property type="gene ID" value="AT1G10570"/>
</dbReference>
<dbReference type="KEGG" id="ath:AT1G10570"/>
<dbReference type="Araport" id="AT1G10570"/>
<dbReference type="TAIR" id="AT1G10570">
    <property type="gene designation" value="OTS2"/>
</dbReference>
<dbReference type="eggNOG" id="KOG0779">
    <property type="taxonomic scope" value="Eukaryota"/>
</dbReference>
<dbReference type="InParanoid" id="Q8RWN0"/>
<dbReference type="OMA" id="ETAANCH"/>
<dbReference type="PhylomeDB" id="Q8RWN0"/>
<dbReference type="PRO" id="PR:Q8RWN0"/>
<dbReference type="Proteomes" id="UP000006548">
    <property type="component" value="Chromosome 1"/>
</dbReference>
<dbReference type="ExpressionAtlas" id="Q8RWN0">
    <property type="expression patterns" value="baseline and differential"/>
</dbReference>
<dbReference type="GO" id="GO:0005654">
    <property type="term" value="C:nucleoplasm"/>
    <property type="evidence" value="ECO:0007669"/>
    <property type="project" value="UniProtKB-SubCell"/>
</dbReference>
<dbReference type="GO" id="GO:0005634">
    <property type="term" value="C:nucleus"/>
    <property type="evidence" value="ECO:0000314"/>
    <property type="project" value="TAIR"/>
</dbReference>
<dbReference type="GO" id="GO:0016929">
    <property type="term" value="F:deSUMOylase activity"/>
    <property type="evidence" value="ECO:0000314"/>
    <property type="project" value="TAIR"/>
</dbReference>
<dbReference type="GO" id="GO:0070139">
    <property type="term" value="F:SUMO-specific endopeptidase activity"/>
    <property type="evidence" value="ECO:0000314"/>
    <property type="project" value="UniProtKB"/>
</dbReference>
<dbReference type="GO" id="GO:0016926">
    <property type="term" value="P:protein desumoylation"/>
    <property type="evidence" value="ECO:0000314"/>
    <property type="project" value="UniProtKB"/>
</dbReference>
<dbReference type="GO" id="GO:0006508">
    <property type="term" value="P:proteolysis"/>
    <property type="evidence" value="ECO:0007669"/>
    <property type="project" value="UniProtKB-KW"/>
</dbReference>
<dbReference type="GO" id="GO:0009651">
    <property type="term" value="P:response to salt stress"/>
    <property type="evidence" value="ECO:0000316"/>
    <property type="project" value="TAIR"/>
</dbReference>
<dbReference type="GO" id="GO:0010228">
    <property type="term" value="P:vegetative to reproductive phase transition of meristem"/>
    <property type="evidence" value="ECO:0000316"/>
    <property type="project" value="TAIR"/>
</dbReference>
<dbReference type="FunFam" id="3.30.310.130:FF:000010">
    <property type="entry name" value="Ubiquitin-like-specific protease 1C"/>
    <property type="match status" value="1"/>
</dbReference>
<dbReference type="Gene3D" id="1.10.418.20">
    <property type="match status" value="1"/>
</dbReference>
<dbReference type="Gene3D" id="3.30.310.130">
    <property type="entry name" value="Ubiquitin-related"/>
    <property type="match status" value="1"/>
</dbReference>
<dbReference type="InterPro" id="IPR038765">
    <property type="entry name" value="Papain-like_cys_pep_sf"/>
</dbReference>
<dbReference type="InterPro" id="IPR003653">
    <property type="entry name" value="Peptidase_C48_C"/>
</dbReference>
<dbReference type="PANTHER" id="PTHR46915">
    <property type="entry name" value="UBIQUITIN-LIKE PROTEASE 4-RELATED"/>
    <property type="match status" value="1"/>
</dbReference>
<dbReference type="PANTHER" id="PTHR46915:SF11">
    <property type="entry name" value="UBIQUITIN-LIKE-SPECIFIC PROTEASE 1C"/>
    <property type="match status" value="1"/>
</dbReference>
<dbReference type="Pfam" id="PF02902">
    <property type="entry name" value="Peptidase_C48"/>
    <property type="match status" value="1"/>
</dbReference>
<dbReference type="SUPFAM" id="SSF54001">
    <property type="entry name" value="Cysteine proteinases"/>
    <property type="match status" value="1"/>
</dbReference>
<dbReference type="PROSITE" id="PS50600">
    <property type="entry name" value="ULP_PROTEASE"/>
    <property type="match status" value="1"/>
</dbReference>
<name>ULP1C_ARATH</name>
<proteinExistence type="evidence at protein level"/>
<sequence>MKRQRAIELDRVKKTMLNIDWDDALGDEEVPELEIIATDKIPPREPTLSGYEPAVSVRSLRDNELDDHLKRQRSLLTRLGDKLADKGEKIRNRIGELEYEKQRRMFQQRTKMQDADNGCQILEKPKSSDVFMRASTASKDTSGQGTSGSKDVSRSTFAAHFSDNLKMGPQPVKLVNDKLQDLGRGSWISKANRDSIIEKNNVWRSLPRLSKCKVSLKNFYSESKDPKGDRRPNEAYGKGKPNESSPYLLVDDDDGDDDKVIGYETPRHWSLKASPLQSSSCRKKSDDKVINLDEDEPLSPMVVEEACELPEGLPEDIYYPSSDQSDGRDLVQVSLKDLKCLSPGEYLTSPVINFYIRYVQHHVFSADKTAANCHFFNTFFYKKLTEAVSYKGNDRDAYFVKFRRWWKGFDLFCKSYIFIPIHEDLHWSLVIICIPDKEDESGLTIIHLDSLGLHPRNLIFNNVKRFLREEWNYLNQDAPLDLPISAKVWRDLPNMINEAEVQVPQQKNDFDCGLFLLFFIRRFIEEAPQRLTLQDLKMIHKKWFKPEEASALRIKIWNILVDLFRKGNQTD</sequence>